<sequence length="630" mass="67308">MTGLLASRLRAEGARSPTKGTDIPMRQPSAEDLDAAHQLVSSARGGRDNVMNFRSDRQEMTGKALDNTQGDGSRNMDSQLQNGHKAPVEQRAGESPPESGANPIDHPTSSKKSPKAQSKEQAFTGHSCSNCGTKRTPLWRRSPTGATICNACGLYLKARNTDRPTHRSRSLLTPYGSSSAQTLDKSRSSTSPTNDGNDPRLTDTWSNYAVKECTPSGSCPGGGSCNGTGGAEGCDGCPAYNNRVYKSAARNAMALHTPRTSPQVSTQGGPGSTEGDAGSSNPETMTLHIACQNCQTTVTPLWRRDENGHPICNACGLYHKLHGAYRPPTMKKSIIKRRKRVVPAMREQSPPSATQSSNGSVSPEASPAALAHNHDSHRQYQNVEHGNGHPPPHTRPLYSHAYHAPPPADFTGYTSNVISLPHHPPSTSQQLRPYDNNHNNGETTNTHRAPMPALHNPKKRTISESSIEDSQRPQASQILTHIPQINPPTPPSSSSASFPNNNPGRFNSISSLLNHPGEAATVTAHDRDDSRVDPALSSAVAPRTQQPQQEHQHASAGSHSPPRFSPSLSPAPPSTTAVPVGGGSGSGAAAVAGVVDHRDAKAERRARLQREAQDMREALKAKERELALLE</sequence>
<organism>
    <name type="scientific">Ajellomyces capsulatus</name>
    <name type="common">Darling's disease fungus</name>
    <name type="synonym">Histoplasma capsulatum</name>
    <dbReference type="NCBI Taxonomy" id="5037"/>
    <lineage>
        <taxon>Eukaryota</taxon>
        <taxon>Fungi</taxon>
        <taxon>Dikarya</taxon>
        <taxon>Ascomycota</taxon>
        <taxon>Pezizomycotina</taxon>
        <taxon>Eurotiomycetes</taxon>
        <taxon>Eurotiomycetidae</taxon>
        <taxon>Onygenales</taxon>
        <taxon>Ajellomycetaceae</taxon>
        <taxon>Histoplasma</taxon>
    </lineage>
</organism>
<name>SREA_AJECA</name>
<gene>
    <name evidence="7" type="primary">SRE1</name>
</gene>
<reference key="1">
    <citation type="journal article" date="2008" name="Biochemistry">
        <title>Sre1, an iron-modulated GATA DNA-binding protein of iron-uptake genes in the fungal pathogen Histoplasma capsulatum.</title>
        <authorList>
            <person name="Chao L.Y."/>
            <person name="Marletta M.A."/>
            <person name="Rine J."/>
        </authorList>
    </citation>
    <scope>NUCLEOTIDE SEQUENCE [GENOMIC DNA]</scope>
    <scope>FUNCTION</scope>
    <scope>INDUCTION</scope>
    <scope>DNA-BINDING</scope>
    <scope>MUTAGENESIS OF CYS-128; CYS-131; CYS-219; CYS-225; CYS-234; CYS-237; CYS-291 AND CYS-294</scope>
    <source>
        <strain>ATCC 26032 / G217B</strain>
    </source>
</reference>
<reference key="2">
    <citation type="journal article" date="2012" name="Eukaryot. Cell">
        <title>SRE1 regulates iron-dependent and -independent pathways in the fungal pathogen Histoplasma capsulatum.</title>
        <authorList>
            <person name="Hwang L.H."/>
            <person name="Seth E."/>
            <person name="Gilmore S.A."/>
            <person name="Sil A."/>
        </authorList>
    </citation>
    <scope>FUNCTION</scope>
    <scope>DISRUPTION PHENOTYPE</scope>
</reference>
<feature type="chain" id="PRO_0000444403" description="GATA-type transcription factor SRE1">
    <location>
        <begin position="1"/>
        <end position="630"/>
    </location>
</feature>
<feature type="zinc finger region" description="GATA-type 1" evidence="3">
    <location>
        <begin position="128"/>
        <end position="152"/>
    </location>
</feature>
<feature type="zinc finger region" description="GATA-type 2" evidence="3">
    <location>
        <begin position="291"/>
        <end position="315"/>
    </location>
</feature>
<feature type="region of interest" description="Disordered" evidence="4">
    <location>
        <begin position="1"/>
        <end position="139"/>
    </location>
</feature>
<feature type="region of interest" description="Disordered" evidence="4">
    <location>
        <begin position="162"/>
        <end position="203"/>
    </location>
</feature>
<feature type="region of interest" description="Cystein-rich region (CRR)" evidence="1">
    <location>
        <begin position="219"/>
        <end position="237"/>
    </location>
</feature>
<feature type="region of interest" description="Disordered" evidence="4">
    <location>
        <begin position="256"/>
        <end position="283"/>
    </location>
</feature>
<feature type="region of interest" description="Disordered" evidence="4">
    <location>
        <begin position="339"/>
        <end position="609"/>
    </location>
</feature>
<feature type="coiled-coil region" evidence="2">
    <location>
        <begin position="595"/>
        <end position="630"/>
    </location>
</feature>
<feature type="compositionally biased region" description="Polar residues" evidence="4">
    <location>
        <begin position="66"/>
        <end position="82"/>
    </location>
</feature>
<feature type="compositionally biased region" description="Polar residues" evidence="4">
    <location>
        <begin position="115"/>
        <end position="133"/>
    </location>
</feature>
<feature type="compositionally biased region" description="Polar residues" evidence="4">
    <location>
        <begin position="175"/>
        <end position="196"/>
    </location>
</feature>
<feature type="compositionally biased region" description="Polar residues" evidence="4">
    <location>
        <begin position="258"/>
        <end position="267"/>
    </location>
</feature>
<feature type="compositionally biased region" description="Polar residues" evidence="4">
    <location>
        <begin position="349"/>
        <end position="363"/>
    </location>
</feature>
<feature type="compositionally biased region" description="Low complexity" evidence="4">
    <location>
        <begin position="436"/>
        <end position="447"/>
    </location>
</feature>
<feature type="compositionally biased region" description="Low complexity" evidence="4">
    <location>
        <begin position="492"/>
        <end position="503"/>
    </location>
</feature>
<feature type="compositionally biased region" description="Polar residues" evidence="4">
    <location>
        <begin position="504"/>
        <end position="513"/>
    </location>
</feature>
<feature type="compositionally biased region" description="Low complexity" evidence="4">
    <location>
        <begin position="558"/>
        <end position="568"/>
    </location>
</feature>
<feature type="compositionally biased region" description="Basic and acidic residues" evidence="4">
    <location>
        <begin position="595"/>
        <end position="609"/>
    </location>
</feature>
<feature type="mutagenesis site" description="In gzf1; decreases both the number of zinc and iron ions bound and the ability to bind DNA; when associated with A-131." evidence="5">
    <original>C</original>
    <variation>A</variation>
    <location>
        <position position="128"/>
    </location>
</feature>
<feature type="mutagenesis site" description="In gzf1; decreases both the number of zinc and iron ions bound and the ability to bind DNA; when associated with A-128." evidence="5">
    <original>C</original>
    <variation>A</variation>
    <location>
        <position position="131"/>
    </location>
</feature>
<feature type="mutagenesis site" description="In crr1; decreases both the number of iron ions bound and the ability to bind DNA; when associated with A-225." evidence="5">
    <original>C</original>
    <variation>A</variation>
    <location>
        <position position="219"/>
    </location>
</feature>
<feature type="mutagenesis site" description="In crr1; decreases both the number of iron ions bound and the ability to bind DNA; when associated with A-219." evidence="5">
    <original>C</original>
    <variation>A</variation>
    <location>
        <position position="225"/>
    </location>
</feature>
<feature type="mutagenesis site" description="In crr2; decreases both the number of iron ions bound and the ability to bind DNA; when associated with A-237." evidence="5">
    <original>C</original>
    <variation>A</variation>
    <location>
        <position position="234"/>
    </location>
</feature>
<feature type="mutagenesis site" description="In crr2; decreases both the number of iron ions bound and the ability to bind DNA; when associated with A-234." evidence="5">
    <original>C</original>
    <variation>A</variation>
    <location>
        <position position="237"/>
    </location>
</feature>
<feature type="mutagenesis site" description="In gzf2; decreases both the number of zinc and iron ions bound and the ability to bind DNA; when associated with A-294." evidence="5">
    <original>C</original>
    <variation>A</variation>
    <location>
        <position position="291"/>
    </location>
</feature>
<feature type="mutagenesis site" description="In gzf2; decreases both the number of zinc and iron ions bound and the ability to bind DNA; when associated with A-291." evidence="5">
    <original>C</original>
    <variation>A</variation>
    <location>
        <position position="294"/>
    </location>
</feature>
<evidence type="ECO:0000250" key="1">
    <source>
        <dbReference type="UniProtKB" id="Q1K8E7"/>
    </source>
</evidence>
<evidence type="ECO:0000255" key="2"/>
<evidence type="ECO:0000255" key="3">
    <source>
        <dbReference type="PROSITE-ProRule" id="PRU00094"/>
    </source>
</evidence>
<evidence type="ECO:0000256" key="4">
    <source>
        <dbReference type="SAM" id="MobiDB-lite"/>
    </source>
</evidence>
<evidence type="ECO:0000269" key="5">
    <source>
    </source>
</evidence>
<evidence type="ECO:0000269" key="6">
    <source>
    </source>
</evidence>
<evidence type="ECO:0000303" key="7">
    <source>
    </source>
</evidence>
<evidence type="ECO:0000305" key="8"/>
<keyword id="KW-0175">Coiled coil</keyword>
<keyword id="KW-0479">Metal-binding</keyword>
<keyword id="KW-0539">Nucleus</keyword>
<keyword id="KW-0677">Repeat</keyword>
<keyword id="KW-0804">Transcription</keyword>
<keyword id="KW-0805">Transcription regulation</keyword>
<keyword id="KW-0862">Zinc</keyword>
<keyword id="KW-0863">Zinc-finger</keyword>
<protein>
    <recommendedName>
        <fullName evidence="7">GATA-type transcription factor SRE1</fullName>
    </recommendedName>
    <alternativeName>
        <fullName evidence="7">Siderophore uptake regulator SRE1</fullName>
    </alternativeName>
</protein>
<dbReference type="EMBL" id="EU220030">
    <property type="protein sequence ID" value="ABY66603.1"/>
    <property type="molecule type" value="Genomic_DNA"/>
</dbReference>
<dbReference type="SMR" id="B4XXY3"/>
<dbReference type="GO" id="GO:0005634">
    <property type="term" value="C:nucleus"/>
    <property type="evidence" value="ECO:0007669"/>
    <property type="project" value="UniProtKB-SubCell"/>
</dbReference>
<dbReference type="GO" id="GO:0000981">
    <property type="term" value="F:DNA-binding transcription factor activity, RNA polymerase II-specific"/>
    <property type="evidence" value="ECO:0007669"/>
    <property type="project" value="TreeGrafter"/>
</dbReference>
<dbReference type="GO" id="GO:0000978">
    <property type="term" value="F:RNA polymerase II cis-regulatory region sequence-specific DNA binding"/>
    <property type="evidence" value="ECO:0007669"/>
    <property type="project" value="TreeGrafter"/>
</dbReference>
<dbReference type="GO" id="GO:0008270">
    <property type="term" value="F:zinc ion binding"/>
    <property type="evidence" value="ECO:0007669"/>
    <property type="project" value="UniProtKB-KW"/>
</dbReference>
<dbReference type="GO" id="GO:0000122">
    <property type="term" value="P:negative regulation of transcription by RNA polymerase II"/>
    <property type="evidence" value="ECO:0007669"/>
    <property type="project" value="TreeGrafter"/>
</dbReference>
<dbReference type="GO" id="GO:0045944">
    <property type="term" value="P:positive regulation of transcription by RNA polymerase II"/>
    <property type="evidence" value="ECO:0007669"/>
    <property type="project" value="TreeGrafter"/>
</dbReference>
<dbReference type="CDD" id="cd00202">
    <property type="entry name" value="ZnF_GATA"/>
    <property type="match status" value="2"/>
</dbReference>
<dbReference type="FunFam" id="3.30.50.10:FF:000007">
    <property type="entry name" value="Nitrogen regulatory AreA, N-terminal"/>
    <property type="match status" value="1"/>
</dbReference>
<dbReference type="FunFam" id="3.30.50.10:FF:000039">
    <property type="entry name" value="Siderophore transcription factor SreA"/>
    <property type="match status" value="1"/>
</dbReference>
<dbReference type="Gene3D" id="3.30.50.10">
    <property type="entry name" value="Erythroid Transcription Factor GATA-1, subunit A"/>
    <property type="match status" value="2"/>
</dbReference>
<dbReference type="InterPro" id="IPR039355">
    <property type="entry name" value="Transcription_factor_GATA"/>
</dbReference>
<dbReference type="InterPro" id="IPR000679">
    <property type="entry name" value="Znf_GATA"/>
</dbReference>
<dbReference type="InterPro" id="IPR013088">
    <property type="entry name" value="Znf_NHR/GATA"/>
</dbReference>
<dbReference type="PANTHER" id="PTHR10071:SF281">
    <property type="entry name" value="BOX A-BINDING FACTOR-RELATED"/>
    <property type="match status" value="1"/>
</dbReference>
<dbReference type="PANTHER" id="PTHR10071">
    <property type="entry name" value="TRANSCRIPTION FACTOR GATA FAMILY MEMBER"/>
    <property type="match status" value="1"/>
</dbReference>
<dbReference type="Pfam" id="PF00320">
    <property type="entry name" value="GATA"/>
    <property type="match status" value="2"/>
</dbReference>
<dbReference type="PRINTS" id="PR00619">
    <property type="entry name" value="GATAZNFINGER"/>
</dbReference>
<dbReference type="SMART" id="SM00401">
    <property type="entry name" value="ZnF_GATA"/>
    <property type="match status" value="2"/>
</dbReference>
<dbReference type="SUPFAM" id="SSF57716">
    <property type="entry name" value="Glucocorticoid receptor-like (DNA-binding domain)"/>
    <property type="match status" value="2"/>
</dbReference>
<dbReference type="PROSITE" id="PS00344">
    <property type="entry name" value="GATA_ZN_FINGER_1"/>
    <property type="match status" value="2"/>
</dbReference>
<dbReference type="PROSITE" id="PS50114">
    <property type="entry name" value="GATA_ZN_FINGER_2"/>
    <property type="match status" value="2"/>
</dbReference>
<accession>B4XXY3</accession>
<comment type="function">
    <text evidence="5 6">GATA-type transcription repressor that regulates iron- acquisition genes through specific binding the GATA sequence element 5'-(G/A)ATC(T/A)GATAA-3' of target promoters in an iron- and zinc-dependent manner (PubMed:18549241, PubMed:22117028). Regulation occurs via direct binding of iron ions (PubMed:18549241). Iron acquisition regulation is critical for survival under both iron-limiting conditions (to acquire essential iron) and iron-replete conditions (to limit iron toxicity) (PubMed:22117028). SRE1 targets include genes encoding a number of key iron-regulated factors such as those involved in siderophore biosynthesis, presumed ferric reductase activity, iron-responsive transcriptional regulation, oxidative stress response, as well as genes encoding a number of putative oxidoreductases, metabolic and mitochondrial enzymes, superoxide dismutase, and genes previously identified as induced during nitrosative stress (PubMed:22117028).</text>
</comment>
<comment type="subcellular location">
    <subcellularLocation>
        <location evidence="8">Nucleus</location>
    </subcellularLocation>
</comment>
<comment type="induction">
    <text evidence="5">Constitutively expressed in high-iron medium, whereas expression is reduced approximately 2.5-fold when an iron chelator, such as deferoxamine, is added to the growth medium (PubMed:18549241).</text>
</comment>
<comment type="domain">
    <text evidence="1">The conserved cystein-rich region (CRR) localized between the zinc fingers is also involved in DNA-binding and transcription repressor activity (By similarity).</text>
</comment>
<comment type="disruption phenotype">
    <text evidence="6">Impairs the repression of siderophore biosynthesis and utilization genes in the presence of abundant iron and thus produces siderophores even under iron-replete conditions (PubMed:22117028).</text>
</comment>
<proteinExistence type="evidence at protein level"/>